<sequence>MLLFIDTANVDEIRAANALGVIAGVTTNPSLIAREGRDFAEVVKEITSIVDGPISAEVISLDAEGMMKEAVELAAIHPNIVIKIPMTTEGLKATRACMEKGIKTNVTLIFSANQALLAARAGATYVSPFVGRLDDIGQDGIGLIYDIADIFNNYDLATQIISASIRHPLHVQQSAKAGAHIATVPYKVLLQMAKHPLTDKGIDAFLADWAKLTPKA</sequence>
<accession>A4J9C4</accession>
<name>TAL_DESRM</name>
<feature type="chain" id="PRO_1000072431" description="Probable transaldolase">
    <location>
        <begin position="1"/>
        <end position="216"/>
    </location>
</feature>
<feature type="active site" description="Schiff-base intermediate with substrate" evidence="1">
    <location>
        <position position="83"/>
    </location>
</feature>
<gene>
    <name evidence="1" type="primary">tal</name>
    <name type="ordered locus">Dred_3175</name>
</gene>
<comment type="function">
    <text evidence="1">Transaldolase is important for the balance of metabolites in the pentose-phosphate pathway.</text>
</comment>
<comment type="catalytic activity">
    <reaction evidence="1">
        <text>D-sedoheptulose 7-phosphate + D-glyceraldehyde 3-phosphate = D-erythrose 4-phosphate + beta-D-fructose 6-phosphate</text>
        <dbReference type="Rhea" id="RHEA:17053"/>
        <dbReference type="ChEBI" id="CHEBI:16897"/>
        <dbReference type="ChEBI" id="CHEBI:57483"/>
        <dbReference type="ChEBI" id="CHEBI:57634"/>
        <dbReference type="ChEBI" id="CHEBI:59776"/>
        <dbReference type="EC" id="2.2.1.2"/>
    </reaction>
</comment>
<comment type="pathway">
    <text evidence="1">Carbohydrate degradation; pentose phosphate pathway; D-glyceraldehyde 3-phosphate and beta-D-fructose 6-phosphate from D-ribose 5-phosphate and D-xylulose 5-phosphate (non-oxidative stage): step 2/3.</text>
</comment>
<comment type="subcellular location">
    <subcellularLocation>
        <location evidence="1">Cytoplasm</location>
    </subcellularLocation>
</comment>
<comment type="similarity">
    <text evidence="1">Belongs to the transaldolase family. Type 3B subfamily.</text>
</comment>
<evidence type="ECO:0000255" key="1">
    <source>
        <dbReference type="HAMAP-Rule" id="MF_00494"/>
    </source>
</evidence>
<reference key="1">
    <citation type="submission" date="2007-03" db="EMBL/GenBank/DDBJ databases">
        <title>Complete sequence of Desulfotomaculum reducens MI-1.</title>
        <authorList>
            <consortium name="US DOE Joint Genome Institute"/>
            <person name="Copeland A."/>
            <person name="Lucas S."/>
            <person name="Lapidus A."/>
            <person name="Barry K."/>
            <person name="Detter J.C."/>
            <person name="Glavina del Rio T."/>
            <person name="Hammon N."/>
            <person name="Israni S."/>
            <person name="Dalin E."/>
            <person name="Tice H."/>
            <person name="Pitluck S."/>
            <person name="Sims D."/>
            <person name="Brettin T."/>
            <person name="Bruce D."/>
            <person name="Han C."/>
            <person name="Tapia R."/>
            <person name="Schmutz J."/>
            <person name="Larimer F."/>
            <person name="Land M."/>
            <person name="Hauser L."/>
            <person name="Kyrpides N."/>
            <person name="Kim E."/>
            <person name="Tebo B.M."/>
            <person name="Richardson P."/>
        </authorList>
    </citation>
    <scope>NUCLEOTIDE SEQUENCE [LARGE SCALE GENOMIC DNA]</scope>
    <source>
        <strain>ATCC BAA-1160 / DSM 100696 / MI-1</strain>
    </source>
</reference>
<protein>
    <recommendedName>
        <fullName evidence="1">Probable transaldolase</fullName>
        <ecNumber evidence="1">2.2.1.2</ecNumber>
    </recommendedName>
</protein>
<organism>
    <name type="scientific">Desulforamulus reducens (strain ATCC BAA-1160 / DSM 100696 / MI-1)</name>
    <name type="common">Desulfotomaculum reducens</name>
    <dbReference type="NCBI Taxonomy" id="349161"/>
    <lineage>
        <taxon>Bacteria</taxon>
        <taxon>Bacillati</taxon>
        <taxon>Bacillota</taxon>
        <taxon>Clostridia</taxon>
        <taxon>Eubacteriales</taxon>
        <taxon>Peptococcaceae</taxon>
        <taxon>Desulforamulus</taxon>
    </lineage>
</organism>
<keyword id="KW-0963">Cytoplasm</keyword>
<keyword id="KW-0570">Pentose shunt</keyword>
<keyword id="KW-1185">Reference proteome</keyword>
<keyword id="KW-0704">Schiff base</keyword>
<keyword id="KW-0808">Transferase</keyword>
<proteinExistence type="inferred from homology"/>
<dbReference type="EC" id="2.2.1.2" evidence="1"/>
<dbReference type="EMBL" id="CP000612">
    <property type="protein sequence ID" value="ABO51677.1"/>
    <property type="molecule type" value="Genomic_DNA"/>
</dbReference>
<dbReference type="RefSeq" id="WP_011879465.1">
    <property type="nucleotide sequence ID" value="NC_009253.1"/>
</dbReference>
<dbReference type="SMR" id="A4J9C4"/>
<dbReference type="STRING" id="349161.Dred_3175"/>
<dbReference type="KEGG" id="drm:Dred_3175"/>
<dbReference type="eggNOG" id="COG0176">
    <property type="taxonomic scope" value="Bacteria"/>
</dbReference>
<dbReference type="HOGENOM" id="CLU_079764_0_0_9"/>
<dbReference type="OrthoDB" id="9807051at2"/>
<dbReference type="UniPathway" id="UPA00115">
    <property type="reaction ID" value="UER00414"/>
</dbReference>
<dbReference type="Proteomes" id="UP000001556">
    <property type="component" value="Chromosome"/>
</dbReference>
<dbReference type="GO" id="GO:0005737">
    <property type="term" value="C:cytoplasm"/>
    <property type="evidence" value="ECO:0007669"/>
    <property type="project" value="UniProtKB-SubCell"/>
</dbReference>
<dbReference type="GO" id="GO:0016832">
    <property type="term" value="F:aldehyde-lyase activity"/>
    <property type="evidence" value="ECO:0007669"/>
    <property type="project" value="InterPro"/>
</dbReference>
<dbReference type="GO" id="GO:0004801">
    <property type="term" value="F:transaldolase activity"/>
    <property type="evidence" value="ECO:0007669"/>
    <property type="project" value="UniProtKB-UniRule"/>
</dbReference>
<dbReference type="GO" id="GO:0005975">
    <property type="term" value="P:carbohydrate metabolic process"/>
    <property type="evidence" value="ECO:0007669"/>
    <property type="project" value="InterPro"/>
</dbReference>
<dbReference type="GO" id="GO:0006098">
    <property type="term" value="P:pentose-phosphate shunt"/>
    <property type="evidence" value="ECO:0007669"/>
    <property type="project" value="UniProtKB-UniRule"/>
</dbReference>
<dbReference type="CDD" id="cd00956">
    <property type="entry name" value="Transaldolase_FSA"/>
    <property type="match status" value="1"/>
</dbReference>
<dbReference type="FunFam" id="3.20.20.70:FF:000018">
    <property type="entry name" value="Probable transaldolase"/>
    <property type="match status" value="1"/>
</dbReference>
<dbReference type="Gene3D" id="3.20.20.70">
    <property type="entry name" value="Aldolase class I"/>
    <property type="match status" value="1"/>
</dbReference>
<dbReference type="HAMAP" id="MF_00494">
    <property type="entry name" value="Transaldolase_3b"/>
    <property type="match status" value="1"/>
</dbReference>
<dbReference type="InterPro" id="IPR013785">
    <property type="entry name" value="Aldolase_TIM"/>
</dbReference>
<dbReference type="InterPro" id="IPR001585">
    <property type="entry name" value="TAL/FSA"/>
</dbReference>
<dbReference type="InterPro" id="IPR022999">
    <property type="entry name" value="Transaldolase_3B"/>
</dbReference>
<dbReference type="InterPro" id="IPR004731">
    <property type="entry name" value="Transaldolase_3B/F6P_aldolase"/>
</dbReference>
<dbReference type="InterPro" id="IPR018225">
    <property type="entry name" value="Transaldolase_AS"/>
</dbReference>
<dbReference type="InterPro" id="IPR033919">
    <property type="entry name" value="TSA/FSA_arc/bac"/>
</dbReference>
<dbReference type="NCBIfam" id="TIGR00875">
    <property type="entry name" value="fsa_talC_mipB"/>
    <property type="match status" value="1"/>
</dbReference>
<dbReference type="PANTHER" id="PTHR10683">
    <property type="entry name" value="TRANSALDOLASE"/>
    <property type="match status" value="1"/>
</dbReference>
<dbReference type="PANTHER" id="PTHR10683:SF36">
    <property type="entry name" value="TRANSALDOLASE"/>
    <property type="match status" value="1"/>
</dbReference>
<dbReference type="Pfam" id="PF00923">
    <property type="entry name" value="TAL_FSA"/>
    <property type="match status" value="1"/>
</dbReference>
<dbReference type="SUPFAM" id="SSF51569">
    <property type="entry name" value="Aldolase"/>
    <property type="match status" value="1"/>
</dbReference>
<dbReference type="PROSITE" id="PS01054">
    <property type="entry name" value="TRANSALDOLASE_1"/>
    <property type="match status" value="1"/>
</dbReference>